<feature type="chain" id="PRO_0000261786" description="Large ribosomal subunit protein uL13">
    <location>
        <begin position="1"/>
        <end position="154"/>
    </location>
</feature>
<keyword id="KW-0687">Ribonucleoprotein</keyword>
<keyword id="KW-0689">Ribosomal protein</keyword>
<accession>Q136Q3</accession>
<comment type="function">
    <text evidence="1">This protein is one of the early assembly proteins of the 50S ribosomal subunit, although it is not seen to bind rRNA by itself. It is important during the early stages of 50S assembly.</text>
</comment>
<comment type="subunit">
    <text evidence="1">Part of the 50S ribosomal subunit.</text>
</comment>
<comment type="similarity">
    <text evidence="1">Belongs to the universal ribosomal protein uL13 family.</text>
</comment>
<sequence length="154" mass="17116">MKTFSAKPAEVTKKWVIIDATGLVVGRLATLVAMRLRGKHLPTYTPHVDCGDNIIIINAAKVVLTGRKRDNKVYYHHTGFIGGIKERTAKSILEGRFPERVVEKAVERMIPRGPLGRVQMGNLRVYGGAEHPHEAQQPEPLDVAAMNRKNMRAA</sequence>
<reference key="1">
    <citation type="submission" date="2006-03" db="EMBL/GenBank/DDBJ databases">
        <title>Complete sequence of Rhodopseudomonas palustris BisB5.</title>
        <authorList>
            <consortium name="US DOE Joint Genome Institute"/>
            <person name="Copeland A."/>
            <person name="Lucas S."/>
            <person name="Lapidus A."/>
            <person name="Barry K."/>
            <person name="Detter J.C."/>
            <person name="Glavina del Rio T."/>
            <person name="Hammon N."/>
            <person name="Israni S."/>
            <person name="Dalin E."/>
            <person name="Tice H."/>
            <person name="Pitluck S."/>
            <person name="Chain P."/>
            <person name="Malfatti S."/>
            <person name="Shin M."/>
            <person name="Vergez L."/>
            <person name="Schmutz J."/>
            <person name="Larimer F."/>
            <person name="Land M."/>
            <person name="Hauser L."/>
            <person name="Pelletier D.A."/>
            <person name="Kyrpides N."/>
            <person name="Lykidis A."/>
            <person name="Oda Y."/>
            <person name="Harwood C.S."/>
            <person name="Richardson P."/>
        </authorList>
    </citation>
    <scope>NUCLEOTIDE SEQUENCE [LARGE SCALE GENOMIC DNA]</scope>
    <source>
        <strain>BisB5</strain>
    </source>
</reference>
<evidence type="ECO:0000255" key="1">
    <source>
        <dbReference type="HAMAP-Rule" id="MF_01366"/>
    </source>
</evidence>
<evidence type="ECO:0000305" key="2"/>
<protein>
    <recommendedName>
        <fullName evidence="1">Large ribosomal subunit protein uL13</fullName>
    </recommendedName>
    <alternativeName>
        <fullName evidence="2">50S ribosomal protein L13</fullName>
    </alternativeName>
</protein>
<organism>
    <name type="scientific">Rhodopseudomonas palustris (strain BisB5)</name>
    <dbReference type="NCBI Taxonomy" id="316057"/>
    <lineage>
        <taxon>Bacteria</taxon>
        <taxon>Pseudomonadati</taxon>
        <taxon>Pseudomonadota</taxon>
        <taxon>Alphaproteobacteria</taxon>
        <taxon>Hyphomicrobiales</taxon>
        <taxon>Nitrobacteraceae</taxon>
        <taxon>Rhodopseudomonas</taxon>
    </lineage>
</organism>
<gene>
    <name evidence="1" type="primary">rplM</name>
    <name type="ordered locus">RPD_2707</name>
</gene>
<name>RL13_RHOPS</name>
<dbReference type="EMBL" id="CP000283">
    <property type="protein sequence ID" value="ABE39936.1"/>
    <property type="molecule type" value="Genomic_DNA"/>
</dbReference>
<dbReference type="SMR" id="Q136Q3"/>
<dbReference type="STRING" id="316057.RPD_2707"/>
<dbReference type="KEGG" id="rpd:RPD_2707"/>
<dbReference type="eggNOG" id="COG0102">
    <property type="taxonomic scope" value="Bacteria"/>
</dbReference>
<dbReference type="HOGENOM" id="CLU_082184_2_0_5"/>
<dbReference type="BioCyc" id="RPAL316057:RPD_RS13615-MONOMER"/>
<dbReference type="Proteomes" id="UP000001818">
    <property type="component" value="Chromosome"/>
</dbReference>
<dbReference type="GO" id="GO:0022625">
    <property type="term" value="C:cytosolic large ribosomal subunit"/>
    <property type="evidence" value="ECO:0007669"/>
    <property type="project" value="TreeGrafter"/>
</dbReference>
<dbReference type="GO" id="GO:0003729">
    <property type="term" value="F:mRNA binding"/>
    <property type="evidence" value="ECO:0007669"/>
    <property type="project" value="TreeGrafter"/>
</dbReference>
<dbReference type="GO" id="GO:0003735">
    <property type="term" value="F:structural constituent of ribosome"/>
    <property type="evidence" value="ECO:0007669"/>
    <property type="project" value="InterPro"/>
</dbReference>
<dbReference type="GO" id="GO:0017148">
    <property type="term" value="P:negative regulation of translation"/>
    <property type="evidence" value="ECO:0007669"/>
    <property type="project" value="TreeGrafter"/>
</dbReference>
<dbReference type="GO" id="GO:0006412">
    <property type="term" value="P:translation"/>
    <property type="evidence" value="ECO:0007669"/>
    <property type="project" value="UniProtKB-UniRule"/>
</dbReference>
<dbReference type="CDD" id="cd00392">
    <property type="entry name" value="Ribosomal_L13"/>
    <property type="match status" value="1"/>
</dbReference>
<dbReference type="FunFam" id="3.90.1180.10:FF:000001">
    <property type="entry name" value="50S ribosomal protein L13"/>
    <property type="match status" value="1"/>
</dbReference>
<dbReference type="Gene3D" id="3.90.1180.10">
    <property type="entry name" value="Ribosomal protein L13"/>
    <property type="match status" value="1"/>
</dbReference>
<dbReference type="HAMAP" id="MF_01366">
    <property type="entry name" value="Ribosomal_uL13"/>
    <property type="match status" value="1"/>
</dbReference>
<dbReference type="InterPro" id="IPR005822">
    <property type="entry name" value="Ribosomal_uL13"/>
</dbReference>
<dbReference type="InterPro" id="IPR005823">
    <property type="entry name" value="Ribosomal_uL13_bac-type"/>
</dbReference>
<dbReference type="InterPro" id="IPR036899">
    <property type="entry name" value="Ribosomal_uL13_sf"/>
</dbReference>
<dbReference type="NCBIfam" id="TIGR01066">
    <property type="entry name" value="rplM_bact"/>
    <property type="match status" value="1"/>
</dbReference>
<dbReference type="PANTHER" id="PTHR11545:SF2">
    <property type="entry name" value="LARGE RIBOSOMAL SUBUNIT PROTEIN UL13M"/>
    <property type="match status" value="1"/>
</dbReference>
<dbReference type="PANTHER" id="PTHR11545">
    <property type="entry name" value="RIBOSOMAL PROTEIN L13"/>
    <property type="match status" value="1"/>
</dbReference>
<dbReference type="Pfam" id="PF00572">
    <property type="entry name" value="Ribosomal_L13"/>
    <property type="match status" value="1"/>
</dbReference>
<dbReference type="PIRSF" id="PIRSF002181">
    <property type="entry name" value="Ribosomal_L13"/>
    <property type="match status" value="1"/>
</dbReference>
<dbReference type="SUPFAM" id="SSF52161">
    <property type="entry name" value="Ribosomal protein L13"/>
    <property type="match status" value="1"/>
</dbReference>
<proteinExistence type="inferred from homology"/>